<gene>
    <name type="primary">SGO1</name>
    <name type="ordered locus">KLLA0A07865g</name>
</gene>
<comment type="function">
    <text evidence="1">Plays a central role in chromosome cohesion during cell division by preventing premature dissociation of cohesin complex from centromeres after prophase, when most of cohesin complex dissociates from chromosomes arms.</text>
</comment>
<comment type="subcellular location">
    <subcellularLocation>
        <location evidence="1">Nucleus</location>
    </subcellularLocation>
    <subcellularLocation>
        <location evidence="1">Chromosome</location>
        <location evidence="1">Centromere</location>
    </subcellularLocation>
</comment>
<comment type="similarity">
    <text evidence="4">Belongs to the shugoshin family.</text>
</comment>
<name>SGO1_KLULA</name>
<dbReference type="EMBL" id="CR382121">
    <property type="protein sequence ID" value="CAH02938.1"/>
    <property type="molecule type" value="Genomic_DNA"/>
</dbReference>
<dbReference type="RefSeq" id="XP_451350.1">
    <property type="nucleotide sequence ID" value="XM_451350.1"/>
</dbReference>
<dbReference type="SMR" id="Q6CXI9"/>
<dbReference type="FunCoup" id="Q6CXI9">
    <property type="interactions" value="186"/>
</dbReference>
<dbReference type="STRING" id="284590.Q6CXI9"/>
<dbReference type="PaxDb" id="284590-Q6CXI9"/>
<dbReference type="KEGG" id="kla:KLLA0_A07865g"/>
<dbReference type="eggNOG" id="ENOG502QSMK">
    <property type="taxonomic scope" value="Eukaryota"/>
</dbReference>
<dbReference type="HOGENOM" id="CLU_019322_0_0_1"/>
<dbReference type="InParanoid" id="Q6CXI9"/>
<dbReference type="OMA" id="HQPKTYR"/>
<dbReference type="Proteomes" id="UP000000598">
    <property type="component" value="Chromosome A"/>
</dbReference>
<dbReference type="GO" id="GO:0000779">
    <property type="term" value="C:condensed chromosome, centromeric region"/>
    <property type="evidence" value="ECO:0007669"/>
    <property type="project" value="UniProtKB-ARBA"/>
</dbReference>
<dbReference type="GO" id="GO:0005634">
    <property type="term" value="C:nucleus"/>
    <property type="evidence" value="ECO:0007669"/>
    <property type="project" value="UniProtKB-SubCell"/>
</dbReference>
<dbReference type="GO" id="GO:0051301">
    <property type="term" value="P:cell division"/>
    <property type="evidence" value="ECO:0007669"/>
    <property type="project" value="UniProtKB-KW"/>
</dbReference>
<dbReference type="GO" id="GO:0045132">
    <property type="term" value="P:meiotic chromosome segregation"/>
    <property type="evidence" value="ECO:0007669"/>
    <property type="project" value="InterPro"/>
</dbReference>
<dbReference type="InterPro" id="IPR011515">
    <property type="entry name" value="Shugoshin_C"/>
</dbReference>
<dbReference type="InterPro" id="IPR011516">
    <property type="entry name" value="Shugoshin_N"/>
</dbReference>
<dbReference type="Pfam" id="PF07557">
    <property type="entry name" value="Shugoshin_C"/>
    <property type="match status" value="1"/>
</dbReference>
<dbReference type="Pfam" id="PF07558">
    <property type="entry name" value="Shugoshin_N"/>
    <property type="match status" value="1"/>
</dbReference>
<proteinExistence type="inferred from homology"/>
<sequence>MSASSQYDEFQAMLEQQKGIYLQQNSQLAKYNSSLMMKITDMETKVSELVQENVSLRSRLSMGELRYREKLNTVFQTLEDGIVEKFLQMNQLLTTVRESQGLESGIHDNPLKPILRGSNGISPRSAKKVEFTGANTTTKPVGFEDPIAEDNHENSGNSLELNDDEVRPLRKRRRKSSRRESLFIPADFEFNDEDPELELNQLPITEDEPPPSTAATSVPEEESQENKHTKEEREDEGKENVSTIPLVPVLPSVTNTGTECSNTNKNNTTEMETALAEDDSYNFTTSVIEYSIPEETSTHEHSHILLETSKSKIDVYNDREETNNNEADDSMNIVQCTIPSQSKIKHSMKHPRTKLKGGQDDIMPHTDYDKDDEKRERRTRGKAVNYKLPSLRAKMRRPTEKLVDATTVTDIHDLQVKRRNNQQQGIPSDDDDQEELLVPAGVPDTNVVIATVEEENRKEPPALPLHEIHLAQNVKPKIALKELSANAINRKVKTSTAVKAISHTKSRVLKDVKFNTLPTKQQAIENNSSDPNVSDENENSNVKPTRTKQATSDLAAFEIIDGISLKHVSRTHRVRAKEDMNKKRKRIHNDEISI</sequence>
<accession>Q6CXI9</accession>
<feature type="chain" id="PRO_0000055448" description="Shugoshin">
    <location>
        <begin position="1"/>
        <end position="594"/>
    </location>
</feature>
<feature type="region of interest" description="Disordered" evidence="3">
    <location>
        <begin position="104"/>
        <end position="178"/>
    </location>
</feature>
<feature type="region of interest" description="Disordered" evidence="3">
    <location>
        <begin position="201"/>
        <end position="266"/>
    </location>
</feature>
<feature type="region of interest" description="Disordered" evidence="3">
    <location>
        <begin position="342"/>
        <end position="380"/>
    </location>
</feature>
<feature type="region of interest" description="Disordered" evidence="3">
    <location>
        <begin position="519"/>
        <end position="549"/>
    </location>
</feature>
<feature type="coiled-coil region" evidence="2">
    <location>
        <begin position="38"/>
        <end position="61"/>
    </location>
</feature>
<feature type="coiled-coil region" evidence="2">
    <location>
        <begin position="220"/>
        <end position="240"/>
    </location>
</feature>
<feature type="compositionally biased region" description="Basic and acidic residues" evidence="3">
    <location>
        <begin position="224"/>
        <end position="239"/>
    </location>
</feature>
<feature type="compositionally biased region" description="Polar residues" evidence="3">
    <location>
        <begin position="252"/>
        <end position="261"/>
    </location>
</feature>
<feature type="compositionally biased region" description="Basic residues" evidence="3">
    <location>
        <begin position="343"/>
        <end position="355"/>
    </location>
</feature>
<feature type="compositionally biased region" description="Basic and acidic residues" evidence="3">
    <location>
        <begin position="357"/>
        <end position="376"/>
    </location>
</feature>
<feature type="compositionally biased region" description="Polar residues" evidence="3">
    <location>
        <begin position="519"/>
        <end position="532"/>
    </location>
</feature>
<feature type="compositionally biased region" description="Polar residues" evidence="3">
    <location>
        <begin position="539"/>
        <end position="549"/>
    </location>
</feature>
<evidence type="ECO:0000250" key="1"/>
<evidence type="ECO:0000255" key="2"/>
<evidence type="ECO:0000256" key="3">
    <source>
        <dbReference type="SAM" id="MobiDB-lite"/>
    </source>
</evidence>
<evidence type="ECO:0000305" key="4"/>
<reference key="1">
    <citation type="journal article" date="2004" name="Nature">
        <title>Genome evolution in yeasts.</title>
        <authorList>
            <person name="Dujon B."/>
            <person name="Sherman D."/>
            <person name="Fischer G."/>
            <person name="Durrens P."/>
            <person name="Casaregola S."/>
            <person name="Lafontaine I."/>
            <person name="de Montigny J."/>
            <person name="Marck C."/>
            <person name="Neuveglise C."/>
            <person name="Talla E."/>
            <person name="Goffard N."/>
            <person name="Frangeul L."/>
            <person name="Aigle M."/>
            <person name="Anthouard V."/>
            <person name="Babour A."/>
            <person name="Barbe V."/>
            <person name="Barnay S."/>
            <person name="Blanchin S."/>
            <person name="Beckerich J.-M."/>
            <person name="Beyne E."/>
            <person name="Bleykasten C."/>
            <person name="Boisrame A."/>
            <person name="Boyer J."/>
            <person name="Cattolico L."/>
            <person name="Confanioleri F."/>
            <person name="de Daruvar A."/>
            <person name="Despons L."/>
            <person name="Fabre E."/>
            <person name="Fairhead C."/>
            <person name="Ferry-Dumazet H."/>
            <person name="Groppi A."/>
            <person name="Hantraye F."/>
            <person name="Hennequin C."/>
            <person name="Jauniaux N."/>
            <person name="Joyet P."/>
            <person name="Kachouri R."/>
            <person name="Kerrest A."/>
            <person name="Koszul R."/>
            <person name="Lemaire M."/>
            <person name="Lesur I."/>
            <person name="Ma L."/>
            <person name="Muller H."/>
            <person name="Nicaud J.-M."/>
            <person name="Nikolski M."/>
            <person name="Oztas S."/>
            <person name="Ozier-Kalogeropoulos O."/>
            <person name="Pellenz S."/>
            <person name="Potier S."/>
            <person name="Richard G.-F."/>
            <person name="Straub M.-L."/>
            <person name="Suleau A."/>
            <person name="Swennen D."/>
            <person name="Tekaia F."/>
            <person name="Wesolowski-Louvel M."/>
            <person name="Westhof E."/>
            <person name="Wirth B."/>
            <person name="Zeniou-Meyer M."/>
            <person name="Zivanovic Y."/>
            <person name="Bolotin-Fukuhara M."/>
            <person name="Thierry A."/>
            <person name="Bouchier C."/>
            <person name="Caudron B."/>
            <person name="Scarpelli C."/>
            <person name="Gaillardin C."/>
            <person name="Weissenbach J."/>
            <person name="Wincker P."/>
            <person name="Souciet J.-L."/>
        </authorList>
    </citation>
    <scope>NUCLEOTIDE SEQUENCE [LARGE SCALE GENOMIC DNA]</scope>
    <source>
        <strain>ATCC 8585 / CBS 2359 / DSM 70799 / NBRC 1267 / NRRL Y-1140 / WM37</strain>
    </source>
</reference>
<organism>
    <name type="scientific">Kluyveromyces lactis (strain ATCC 8585 / CBS 2359 / DSM 70799 / NBRC 1267 / NRRL Y-1140 / WM37)</name>
    <name type="common">Yeast</name>
    <name type="synonym">Candida sphaerica</name>
    <dbReference type="NCBI Taxonomy" id="284590"/>
    <lineage>
        <taxon>Eukaryota</taxon>
        <taxon>Fungi</taxon>
        <taxon>Dikarya</taxon>
        <taxon>Ascomycota</taxon>
        <taxon>Saccharomycotina</taxon>
        <taxon>Saccharomycetes</taxon>
        <taxon>Saccharomycetales</taxon>
        <taxon>Saccharomycetaceae</taxon>
        <taxon>Kluyveromyces</taxon>
    </lineage>
</organism>
<protein>
    <recommendedName>
        <fullName>Shugoshin</fullName>
    </recommendedName>
</protein>
<keyword id="KW-0131">Cell cycle</keyword>
<keyword id="KW-0132">Cell division</keyword>
<keyword id="KW-0137">Centromere</keyword>
<keyword id="KW-0158">Chromosome</keyword>
<keyword id="KW-0159">Chromosome partition</keyword>
<keyword id="KW-0175">Coiled coil</keyword>
<keyword id="KW-0539">Nucleus</keyword>
<keyword id="KW-1185">Reference proteome</keyword>